<dbReference type="EC" id="5.6.1.7" evidence="1"/>
<dbReference type="EMBL" id="CP000444">
    <property type="protein sequence ID" value="ABI41558.1"/>
    <property type="molecule type" value="Genomic_DNA"/>
</dbReference>
<dbReference type="SMR" id="Q0HZ97"/>
<dbReference type="KEGG" id="shm:Shewmr7_0555"/>
<dbReference type="HOGENOM" id="CLU_016503_3_0_6"/>
<dbReference type="GO" id="GO:0005737">
    <property type="term" value="C:cytoplasm"/>
    <property type="evidence" value="ECO:0007669"/>
    <property type="project" value="UniProtKB-SubCell"/>
</dbReference>
<dbReference type="GO" id="GO:0005524">
    <property type="term" value="F:ATP binding"/>
    <property type="evidence" value="ECO:0007669"/>
    <property type="project" value="UniProtKB-UniRule"/>
</dbReference>
<dbReference type="GO" id="GO:0140662">
    <property type="term" value="F:ATP-dependent protein folding chaperone"/>
    <property type="evidence" value="ECO:0007669"/>
    <property type="project" value="InterPro"/>
</dbReference>
<dbReference type="GO" id="GO:0016853">
    <property type="term" value="F:isomerase activity"/>
    <property type="evidence" value="ECO:0007669"/>
    <property type="project" value="UniProtKB-KW"/>
</dbReference>
<dbReference type="GO" id="GO:0051082">
    <property type="term" value="F:unfolded protein binding"/>
    <property type="evidence" value="ECO:0007669"/>
    <property type="project" value="UniProtKB-UniRule"/>
</dbReference>
<dbReference type="GO" id="GO:0042026">
    <property type="term" value="P:protein refolding"/>
    <property type="evidence" value="ECO:0007669"/>
    <property type="project" value="UniProtKB-UniRule"/>
</dbReference>
<dbReference type="CDD" id="cd03344">
    <property type="entry name" value="GroEL"/>
    <property type="match status" value="1"/>
</dbReference>
<dbReference type="FunFam" id="1.10.560.10:FF:000001">
    <property type="entry name" value="60 kDa chaperonin"/>
    <property type="match status" value="1"/>
</dbReference>
<dbReference type="FunFam" id="3.50.7.10:FF:000001">
    <property type="entry name" value="60 kDa chaperonin"/>
    <property type="match status" value="1"/>
</dbReference>
<dbReference type="Gene3D" id="3.50.7.10">
    <property type="entry name" value="GroEL"/>
    <property type="match status" value="1"/>
</dbReference>
<dbReference type="Gene3D" id="1.10.560.10">
    <property type="entry name" value="GroEL-like equatorial domain"/>
    <property type="match status" value="1"/>
</dbReference>
<dbReference type="Gene3D" id="3.30.260.10">
    <property type="entry name" value="TCP-1-like chaperonin intermediate domain"/>
    <property type="match status" value="1"/>
</dbReference>
<dbReference type="HAMAP" id="MF_00600">
    <property type="entry name" value="CH60"/>
    <property type="match status" value="1"/>
</dbReference>
<dbReference type="InterPro" id="IPR018370">
    <property type="entry name" value="Chaperonin_Cpn60_CS"/>
</dbReference>
<dbReference type="InterPro" id="IPR001844">
    <property type="entry name" value="Cpn60/GroEL"/>
</dbReference>
<dbReference type="InterPro" id="IPR002423">
    <property type="entry name" value="Cpn60/GroEL/TCP-1"/>
</dbReference>
<dbReference type="InterPro" id="IPR027409">
    <property type="entry name" value="GroEL-like_apical_dom_sf"/>
</dbReference>
<dbReference type="InterPro" id="IPR027413">
    <property type="entry name" value="GROEL-like_equatorial_sf"/>
</dbReference>
<dbReference type="InterPro" id="IPR027410">
    <property type="entry name" value="TCP-1-like_intermed_sf"/>
</dbReference>
<dbReference type="NCBIfam" id="TIGR02348">
    <property type="entry name" value="GroEL"/>
    <property type="match status" value="1"/>
</dbReference>
<dbReference type="NCBIfam" id="NF000592">
    <property type="entry name" value="PRK00013.1"/>
    <property type="match status" value="1"/>
</dbReference>
<dbReference type="NCBIfam" id="NF009487">
    <property type="entry name" value="PRK12849.1"/>
    <property type="match status" value="1"/>
</dbReference>
<dbReference type="NCBIfam" id="NF009488">
    <property type="entry name" value="PRK12850.1"/>
    <property type="match status" value="1"/>
</dbReference>
<dbReference type="NCBIfam" id="NF009489">
    <property type="entry name" value="PRK12851.1"/>
    <property type="match status" value="1"/>
</dbReference>
<dbReference type="PANTHER" id="PTHR45633">
    <property type="entry name" value="60 KDA HEAT SHOCK PROTEIN, MITOCHONDRIAL"/>
    <property type="match status" value="1"/>
</dbReference>
<dbReference type="Pfam" id="PF00118">
    <property type="entry name" value="Cpn60_TCP1"/>
    <property type="match status" value="1"/>
</dbReference>
<dbReference type="PRINTS" id="PR00298">
    <property type="entry name" value="CHAPERONIN60"/>
</dbReference>
<dbReference type="SUPFAM" id="SSF52029">
    <property type="entry name" value="GroEL apical domain-like"/>
    <property type="match status" value="1"/>
</dbReference>
<dbReference type="SUPFAM" id="SSF48592">
    <property type="entry name" value="GroEL equatorial domain-like"/>
    <property type="match status" value="1"/>
</dbReference>
<dbReference type="SUPFAM" id="SSF54849">
    <property type="entry name" value="GroEL-intermediate domain like"/>
    <property type="match status" value="1"/>
</dbReference>
<dbReference type="PROSITE" id="PS00296">
    <property type="entry name" value="CHAPERONINS_CPN60"/>
    <property type="match status" value="1"/>
</dbReference>
<keyword id="KW-0067">ATP-binding</keyword>
<keyword id="KW-0143">Chaperone</keyword>
<keyword id="KW-0963">Cytoplasm</keyword>
<keyword id="KW-0413">Isomerase</keyword>
<keyword id="KW-0547">Nucleotide-binding</keyword>
<protein>
    <recommendedName>
        <fullName evidence="1">Chaperonin GroEL</fullName>
        <ecNumber evidence="1">5.6.1.7</ecNumber>
    </recommendedName>
    <alternativeName>
        <fullName evidence="1">60 kDa chaperonin</fullName>
    </alternativeName>
    <alternativeName>
        <fullName evidence="1">Chaperonin-60</fullName>
        <shortName evidence="1">Cpn60</shortName>
    </alternativeName>
</protein>
<proteinExistence type="inferred from homology"/>
<evidence type="ECO:0000255" key="1">
    <source>
        <dbReference type="HAMAP-Rule" id="MF_00600"/>
    </source>
</evidence>
<organism>
    <name type="scientific">Shewanella sp. (strain MR-7)</name>
    <dbReference type="NCBI Taxonomy" id="60481"/>
    <lineage>
        <taxon>Bacteria</taxon>
        <taxon>Pseudomonadati</taxon>
        <taxon>Pseudomonadota</taxon>
        <taxon>Gammaproteobacteria</taxon>
        <taxon>Alteromonadales</taxon>
        <taxon>Shewanellaceae</taxon>
        <taxon>Shewanella</taxon>
    </lineage>
</organism>
<name>CH60_SHESR</name>
<sequence>MAAKEVVFGNDARVKMLAGVNILANAVKVTLGPKGRNVVLDKSFGSPLITKDGVSVAKEIELEDKFENMGAQMVKEVASKANDAAGDGTTTATVLAQAIVTEGLKAVAAGMNPMDLKRGIDKAVAAAVIELKNLSQDCADSKAIAQVGTISANSDESIGEIIATAMEKVGKEGVITVEEGQALENELDVVEGMQFDRGYLSPYFINKPETGSVELDHPFVLLVDKKISNIRELLPILEGLAKTGKPLLIVAEDVEGEALATLVVNNMRGIVKVAAVKAPGFGDRRKAMLQDVAILTGGTVIAEEIGLELEKATLEDLGTAKRVVITKDNTTIIDGNGEQAQIEARVSQIKQQIEESTSDYDKEKLQERMAKLAGGVAVIKVGAATEVEMKEKKARVEDALHATRAAVEEGVVPGGGVALVRVASKIADVEVANEDQKHGVVIALRAMEAPLRQIATNAGEEASVVANTVKNGSGNYGYNAGNDTYGDMLEMGILDPTKVTRSALQFAASIAGLMITTEAMVAELPKADAPDMGGMGGMGGMGGMM</sequence>
<gene>
    <name evidence="1" type="primary">groEL</name>
    <name evidence="1" type="synonym">groL</name>
    <name type="ordered locus">Shewmr7_0555</name>
</gene>
<accession>Q0HZ97</accession>
<feature type="chain" id="PRO_0000332081" description="Chaperonin GroEL">
    <location>
        <begin position="1"/>
        <end position="545"/>
    </location>
</feature>
<feature type="binding site" evidence="1">
    <location>
        <begin position="30"/>
        <end position="33"/>
    </location>
    <ligand>
        <name>ATP</name>
        <dbReference type="ChEBI" id="CHEBI:30616"/>
    </ligand>
</feature>
<feature type="binding site" evidence="1">
    <location>
        <position position="51"/>
    </location>
    <ligand>
        <name>ATP</name>
        <dbReference type="ChEBI" id="CHEBI:30616"/>
    </ligand>
</feature>
<feature type="binding site" evidence="1">
    <location>
        <begin position="87"/>
        <end position="91"/>
    </location>
    <ligand>
        <name>ATP</name>
        <dbReference type="ChEBI" id="CHEBI:30616"/>
    </ligand>
</feature>
<feature type="binding site" evidence="1">
    <location>
        <position position="415"/>
    </location>
    <ligand>
        <name>ATP</name>
        <dbReference type="ChEBI" id="CHEBI:30616"/>
    </ligand>
</feature>
<feature type="binding site" evidence="1">
    <location>
        <position position="495"/>
    </location>
    <ligand>
        <name>ATP</name>
        <dbReference type="ChEBI" id="CHEBI:30616"/>
    </ligand>
</feature>
<comment type="function">
    <text evidence="1">Together with its co-chaperonin GroES, plays an essential role in assisting protein folding. The GroEL-GroES system forms a nano-cage that allows encapsulation of the non-native substrate proteins and provides a physical environment optimized to promote and accelerate protein folding.</text>
</comment>
<comment type="catalytic activity">
    <reaction evidence="1">
        <text>ATP + H2O + a folded polypeptide = ADP + phosphate + an unfolded polypeptide.</text>
        <dbReference type="EC" id="5.6.1.7"/>
    </reaction>
</comment>
<comment type="subunit">
    <text evidence="1">Forms a cylinder of 14 subunits composed of two heptameric rings stacked back-to-back. Interacts with the co-chaperonin GroES.</text>
</comment>
<comment type="subcellular location">
    <subcellularLocation>
        <location evidence="1">Cytoplasm</location>
    </subcellularLocation>
</comment>
<comment type="similarity">
    <text evidence="1">Belongs to the chaperonin (HSP60) family.</text>
</comment>
<reference key="1">
    <citation type="submission" date="2006-08" db="EMBL/GenBank/DDBJ databases">
        <title>Complete sequence of chromosome 1 of Shewanella sp. MR-7.</title>
        <authorList>
            <person name="Copeland A."/>
            <person name="Lucas S."/>
            <person name="Lapidus A."/>
            <person name="Barry K."/>
            <person name="Detter J.C."/>
            <person name="Glavina del Rio T."/>
            <person name="Hammon N."/>
            <person name="Israni S."/>
            <person name="Dalin E."/>
            <person name="Tice H."/>
            <person name="Pitluck S."/>
            <person name="Kiss H."/>
            <person name="Brettin T."/>
            <person name="Bruce D."/>
            <person name="Han C."/>
            <person name="Tapia R."/>
            <person name="Gilna P."/>
            <person name="Schmutz J."/>
            <person name="Larimer F."/>
            <person name="Land M."/>
            <person name="Hauser L."/>
            <person name="Kyrpides N."/>
            <person name="Mikhailova N."/>
            <person name="Nealson K."/>
            <person name="Konstantinidis K."/>
            <person name="Klappenbach J."/>
            <person name="Tiedje J."/>
            <person name="Richardson P."/>
        </authorList>
    </citation>
    <scope>NUCLEOTIDE SEQUENCE [LARGE SCALE GENOMIC DNA]</scope>
    <source>
        <strain>MR-7</strain>
    </source>
</reference>